<reference key="1">
    <citation type="journal article" date="2000" name="Genomics">
        <title>RINX(VSX1), a novel homeobox gene expressed in the inner nuclear layer of the adult retina.</title>
        <authorList>
            <person name="Hayashi T."/>
            <person name="Huang J."/>
            <person name="Deeb S.S."/>
        </authorList>
    </citation>
    <scope>NUCLEOTIDE SEQUENCE [MRNA]</scope>
    <source>
        <tissue>Retina</tissue>
    </source>
</reference>
<name>VSX1_BOVIN</name>
<gene>
    <name type="primary">VSX1</name>
    <name type="synonym">RINX</name>
</gene>
<evidence type="ECO:0000250" key="1">
    <source>
        <dbReference type="UniProtKB" id="Q91V10"/>
    </source>
</evidence>
<evidence type="ECO:0000255" key="2"/>
<evidence type="ECO:0000255" key="3">
    <source>
        <dbReference type="PROSITE-ProRule" id="PRU00108"/>
    </source>
</evidence>
<evidence type="ECO:0000255" key="4">
    <source>
        <dbReference type="PROSITE-ProRule" id="PRU00829"/>
    </source>
</evidence>
<evidence type="ECO:0000256" key="5">
    <source>
        <dbReference type="SAM" id="MobiDB-lite"/>
    </source>
</evidence>
<evidence type="ECO:0000305" key="6"/>
<feature type="chain" id="PRO_0000049354" description="Visual system homeobox 1">
    <location>
        <begin position="1"/>
        <end position="365"/>
    </location>
</feature>
<feature type="domain" description="CVC" evidence="4">
    <location>
        <begin position="224"/>
        <end position="277"/>
    </location>
</feature>
<feature type="DNA-binding region" description="Homeobox" evidence="3">
    <location>
        <begin position="164"/>
        <end position="223"/>
    </location>
</feature>
<feature type="region of interest" description="Disordered" evidence="5">
    <location>
        <begin position="1"/>
        <end position="65"/>
    </location>
</feature>
<feature type="region of interest" description="Disordered" evidence="5">
    <location>
        <begin position="114"/>
        <end position="169"/>
    </location>
</feature>
<feature type="region of interest" description="Disordered" evidence="5">
    <location>
        <begin position="294"/>
        <end position="365"/>
    </location>
</feature>
<feature type="short sequence motif" description="Octapeptide motif">
    <location>
        <begin position="31"/>
        <end position="38"/>
    </location>
</feature>
<feature type="short sequence motif" description="Nuclear localization signal" evidence="2">
    <location>
        <begin position="161"/>
        <end position="166"/>
    </location>
</feature>
<feature type="compositionally biased region" description="Basic and acidic residues" evidence="5">
    <location>
        <begin position="1"/>
        <end position="12"/>
    </location>
</feature>
<feature type="compositionally biased region" description="Low complexity" evidence="5">
    <location>
        <begin position="19"/>
        <end position="45"/>
    </location>
</feature>
<feature type="compositionally biased region" description="Low complexity" evidence="5">
    <location>
        <begin position="56"/>
        <end position="65"/>
    </location>
</feature>
<feature type="compositionally biased region" description="Pro residues" evidence="5">
    <location>
        <begin position="114"/>
        <end position="128"/>
    </location>
</feature>
<feature type="compositionally biased region" description="Basic residues" evidence="5">
    <location>
        <begin position="160"/>
        <end position="169"/>
    </location>
</feature>
<protein>
    <recommendedName>
        <fullName>Visual system homeobox 1</fullName>
    </recommendedName>
    <alternativeName>
        <fullName>Homeodomain protein RINX</fullName>
    </alternativeName>
    <alternativeName>
        <fullName>Retinal inner nuclear layer homeobox protein</fullName>
    </alternativeName>
    <alternativeName>
        <fullName>Transcription factor VSX1</fullName>
    </alternativeName>
</protein>
<accession>Q9GMA3</accession>
<proteinExistence type="evidence at transcript level"/>
<comment type="function">
    <text evidence="1">Binds to the 37-bp core of the locus control region (LCR) of the red/green visual pigment gene cluster (By similarity). May regulate the activity of the LCR and the cone opsin genes at earlier stages of development (By similarity). Dispensable in early retinal development (By similarity).</text>
</comment>
<comment type="subcellular location">
    <subcellularLocation>
        <location evidence="1">Nucleus</location>
    </subcellularLocation>
</comment>
<comment type="tissue specificity">
    <text>Expressed in a subset of cells in the inner nuclear layer of the retina.</text>
</comment>
<comment type="similarity">
    <text evidence="6">Belongs to the paired homeobox family.</text>
</comment>
<keyword id="KW-0217">Developmental protein</keyword>
<keyword id="KW-0238">DNA-binding</keyword>
<keyword id="KW-0371">Homeobox</keyword>
<keyword id="KW-0539">Nucleus</keyword>
<keyword id="KW-1185">Reference proteome</keyword>
<keyword id="KW-0716">Sensory transduction</keyword>
<keyword id="KW-0804">Transcription</keyword>
<keyword id="KW-0805">Transcription regulation</keyword>
<keyword id="KW-0844">Vision</keyword>
<dbReference type="EMBL" id="AF251032">
    <property type="protein sequence ID" value="AAF99655.1"/>
    <property type="molecule type" value="mRNA"/>
</dbReference>
<dbReference type="RefSeq" id="NP_777192.1">
    <property type="nucleotide sequence ID" value="NM_174767.2"/>
</dbReference>
<dbReference type="SMR" id="Q9GMA3"/>
<dbReference type="FunCoup" id="Q9GMA3">
    <property type="interactions" value="89"/>
</dbReference>
<dbReference type="STRING" id="9913.ENSBTAP00000004329"/>
<dbReference type="PaxDb" id="9913-ENSBTAP00000004329"/>
<dbReference type="GeneID" id="286802"/>
<dbReference type="KEGG" id="bta:286802"/>
<dbReference type="CTD" id="30813"/>
<dbReference type="eggNOG" id="KOG0494">
    <property type="taxonomic scope" value="Eukaryota"/>
</dbReference>
<dbReference type="HOGENOM" id="CLU_049243_1_0_1"/>
<dbReference type="InParanoid" id="Q9GMA3"/>
<dbReference type="OrthoDB" id="6159439at2759"/>
<dbReference type="TreeFam" id="TF350743"/>
<dbReference type="Proteomes" id="UP000009136">
    <property type="component" value="Unplaced"/>
</dbReference>
<dbReference type="GO" id="GO:0005634">
    <property type="term" value="C:nucleus"/>
    <property type="evidence" value="ECO:0000318"/>
    <property type="project" value="GO_Central"/>
</dbReference>
<dbReference type="GO" id="GO:0000981">
    <property type="term" value="F:DNA-binding transcription factor activity, RNA polymerase II-specific"/>
    <property type="evidence" value="ECO:0007669"/>
    <property type="project" value="InterPro"/>
</dbReference>
<dbReference type="GO" id="GO:0000976">
    <property type="term" value="F:transcription cis-regulatory region binding"/>
    <property type="evidence" value="ECO:0000318"/>
    <property type="project" value="GO_Central"/>
</dbReference>
<dbReference type="GO" id="GO:0048666">
    <property type="term" value="P:neuron development"/>
    <property type="evidence" value="ECO:0000318"/>
    <property type="project" value="GO_Central"/>
</dbReference>
<dbReference type="GO" id="GO:0006355">
    <property type="term" value="P:regulation of DNA-templated transcription"/>
    <property type="evidence" value="ECO:0000318"/>
    <property type="project" value="GO_Central"/>
</dbReference>
<dbReference type="GO" id="GO:0007601">
    <property type="term" value="P:visual perception"/>
    <property type="evidence" value="ECO:0007669"/>
    <property type="project" value="UniProtKB-KW"/>
</dbReference>
<dbReference type="CDD" id="cd00086">
    <property type="entry name" value="homeodomain"/>
    <property type="match status" value="1"/>
</dbReference>
<dbReference type="FunFam" id="1.10.10.60:FF:000065">
    <property type="entry name" value="Visual system homeobox 1"/>
    <property type="match status" value="1"/>
</dbReference>
<dbReference type="Gene3D" id="1.10.10.60">
    <property type="entry name" value="Homeodomain-like"/>
    <property type="match status" value="1"/>
</dbReference>
<dbReference type="InterPro" id="IPR023339">
    <property type="entry name" value="CVC"/>
</dbReference>
<dbReference type="InterPro" id="IPR001356">
    <property type="entry name" value="HD"/>
</dbReference>
<dbReference type="InterPro" id="IPR017970">
    <property type="entry name" value="Homeobox_CS"/>
</dbReference>
<dbReference type="InterPro" id="IPR051775">
    <property type="entry name" value="Homeobox_domain"/>
</dbReference>
<dbReference type="InterPro" id="IPR009057">
    <property type="entry name" value="Homeodomain-like_sf"/>
</dbReference>
<dbReference type="PANTHER" id="PTHR24323">
    <property type="entry name" value="CEH-10 HOMEODOMAIN-CONTAINING HOMOLOG"/>
    <property type="match status" value="1"/>
</dbReference>
<dbReference type="PANTHER" id="PTHR24323:SF3">
    <property type="entry name" value="VISUAL SYSTEM HOMEOBOX 1"/>
    <property type="match status" value="1"/>
</dbReference>
<dbReference type="Pfam" id="PF00046">
    <property type="entry name" value="Homeodomain"/>
    <property type="match status" value="1"/>
</dbReference>
<dbReference type="SMART" id="SM00389">
    <property type="entry name" value="HOX"/>
    <property type="match status" value="1"/>
</dbReference>
<dbReference type="SUPFAM" id="SSF46689">
    <property type="entry name" value="Homeodomain-like"/>
    <property type="match status" value="1"/>
</dbReference>
<dbReference type="PROSITE" id="PS51496">
    <property type="entry name" value="CVC"/>
    <property type="match status" value="1"/>
</dbReference>
<dbReference type="PROSITE" id="PS00027">
    <property type="entry name" value="HOMEOBOX_1"/>
    <property type="match status" value="1"/>
</dbReference>
<dbReference type="PROSITE" id="PS50071">
    <property type="entry name" value="HOMEOBOX_2"/>
    <property type="match status" value="1"/>
</dbReference>
<organism>
    <name type="scientific">Bos taurus</name>
    <name type="common">Bovine</name>
    <dbReference type="NCBI Taxonomy" id="9913"/>
    <lineage>
        <taxon>Eukaryota</taxon>
        <taxon>Metazoa</taxon>
        <taxon>Chordata</taxon>
        <taxon>Craniata</taxon>
        <taxon>Vertebrata</taxon>
        <taxon>Euteleostomi</taxon>
        <taxon>Mammalia</taxon>
        <taxon>Eutheria</taxon>
        <taxon>Laurasiatheria</taxon>
        <taxon>Artiodactyla</taxon>
        <taxon>Ruminantia</taxon>
        <taxon>Pecora</taxon>
        <taxon>Bovidae</taxon>
        <taxon>Bovinae</taxon>
        <taxon>Bos</taxon>
    </lineage>
</organism>
<sequence>MTGRDALSDGRARSRALVPGGPSTGSRPRGFAITDLLGLEAELPAPEGPGPGSGCEGPAAAPRAGPGLGGSCPARGALPLGLGLLCGFGAQPPAAARAPCLLLADVPFLPPEGPEPLAPRFPGRPPPSAARQKRSESVSTSDEDSPSEDRSDRKASPAPSKRKKRRHRTVFTAHQLEELEKAFSEAHYPDVYAREMLAMKTELPEDRIQVWFQNRRAKWRKREKRWGGSSVMAEYGLYGAMVRHCIPLPDSVLGSGEGGLLGSCAPWLLGMHKKSAGTIRKAESEEKLAGLWGSDHLKEGSSPHQAGPQRGLEEGSPVSGVEDVVIDLSSSTRQETDRAQQGVGAQGRPDSEGLEGLQPGKEGAL</sequence>